<accession>P76501</accession>
<accession>Q2MAL4</accession>
<feature type="signal peptide" evidence="1">
    <location>
        <begin position="1"/>
        <end position="28"/>
    </location>
</feature>
<feature type="chain" id="PRO_0000013773" description="Uncharacterized fimbrial-like protein YfcR">
    <location>
        <begin position="29"/>
        <end position="170"/>
    </location>
</feature>
<evidence type="ECO:0000255" key="1"/>
<evidence type="ECO:0000269" key="2">
    <source>
    </source>
</evidence>
<evidence type="ECO:0000305" key="3"/>
<evidence type="ECO:0000305" key="4">
    <source>
    </source>
</evidence>
<comment type="function">
    <text evidence="2">Part of the yfcOPQRSUV fimbrial operon. Could contribute to adhesion to various surfaces in specific environmental niches. Increases adhesion to eukaryotic T24 bladder epithelial cells in the absence of fim genes.</text>
</comment>
<comment type="induction">
    <text evidence="2">Expression is negatively regulated by H-NS and subjected to cAMP receptor protein (CRP)-mediated catabolite repression.</text>
</comment>
<comment type="disruption phenotype">
    <text evidence="2">Deletion of the operon under classical laboratory conditions does not result in any major effect on E.coli capacity to form biofilms compared with the wild-type strain.</text>
</comment>
<comment type="miscellaneous">
    <text evidence="4">The operon is cryptic under classical laboratory conditions, but is functional when constitutively expressed.</text>
</comment>
<comment type="similarity">
    <text evidence="3">Belongs to the fimbrial protein family.</text>
</comment>
<protein>
    <recommendedName>
        <fullName>Uncharacterized fimbrial-like protein YfcR</fullName>
    </recommendedName>
</protein>
<proteinExistence type="evidence at transcript level"/>
<gene>
    <name type="primary">yfcR</name>
    <name type="ordered locus">b2335</name>
    <name type="ordered locus">JW2332</name>
</gene>
<dbReference type="EMBL" id="U00096">
    <property type="protein sequence ID" value="AAC75395.1"/>
    <property type="molecule type" value="Genomic_DNA"/>
</dbReference>
<dbReference type="EMBL" id="AP009048">
    <property type="protein sequence ID" value="BAE76692.1"/>
    <property type="molecule type" value="Genomic_DNA"/>
</dbReference>
<dbReference type="PIR" id="E65006">
    <property type="entry name" value="E65006"/>
</dbReference>
<dbReference type="RefSeq" id="NP_416838.1">
    <property type="nucleotide sequence ID" value="NC_000913.3"/>
</dbReference>
<dbReference type="RefSeq" id="WP_001311011.1">
    <property type="nucleotide sequence ID" value="NZ_LN832404.1"/>
</dbReference>
<dbReference type="SMR" id="P76501"/>
<dbReference type="BioGRID" id="4260531">
    <property type="interactions" value="13"/>
</dbReference>
<dbReference type="BioGRID" id="851159">
    <property type="interactions" value="4"/>
</dbReference>
<dbReference type="FunCoup" id="P76501">
    <property type="interactions" value="40"/>
</dbReference>
<dbReference type="IntAct" id="P76501">
    <property type="interactions" value="4"/>
</dbReference>
<dbReference type="STRING" id="511145.b2335"/>
<dbReference type="PaxDb" id="511145-b2335"/>
<dbReference type="DNASU" id="946818"/>
<dbReference type="EnsemblBacteria" id="AAC75395">
    <property type="protein sequence ID" value="AAC75395"/>
    <property type="gene ID" value="b2335"/>
</dbReference>
<dbReference type="GeneID" id="946818"/>
<dbReference type="KEGG" id="ecj:JW2332"/>
<dbReference type="KEGG" id="eco:b2335"/>
<dbReference type="PATRIC" id="fig|1411691.4.peg.4397"/>
<dbReference type="EchoBASE" id="EB3874"/>
<dbReference type="eggNOG" id="COG3539">
    <property type="taxonomic scope" value="Bacteria"/>
</dbReference>
<dbReference type="HOGENOM" id="CLU_114111_0_0_6"/>
<dbReference type="InParanoid" id="P76501"/>
<dbReference type="OMA" id="FNASMTM"/>
<dbReference type="OrthoDB" id="6572437at2"/>
<dbReference type="PhylomeDB" id="P76501"/>
<dbReference type="BioCyc" id="EcoCyc:G7206-MONOMER"/>
<dbReference type="PRO" id="PR:P76501"/>
<dbReference type="Proteomes" id="UP000000625">
    <property type="component" value="Chromosome"/>
</dbReference>
<dbReference type="GO" id="GO:0009289">
    <property type="term" value="C:pilus"/>
    <property type="evidence" value="ECO:0000318"/>
    <property type="project" value="GO_Central"/>
</dbReference>
<dbReference type="GO" id="GO:0007155">
    <property type="term" value="P:cell adhesion"/>
    <property type="evidence" value="ECO:0000315"/>
    <property type="project" value="EcoCyc"/>
</dbReference>
<dbReference type="GO" id="GO:0043709">
    <property type="term" value="P:cell adhesion involved in single-species biofilm formation"/>
    <property type="evidence" value="ECO:0000318"/>
    <property type="project" value="GO_Central"/>
</dbReference>
<dbReference type="Gene3D" id="2.60.40.1090">
    <property type="entry name" value="Fimbrial-type adhesion domain"/>
    <property type="match status" value="1"/>
</dbReference>
<dbReference type="InterPro" id="IPR000259">
    <property type="entry name" value="Adhesion_dom_fimbrial"/>
</dbReference>
<dbReference type="InterPro" id="IPR036937">
    <property type="entry name" value="Adhesion_dom_fimbrial_sf"/>
</dbReference>
<dbReference type="InterPro" id="IPR008966">
    <property type="entry name" value="Adhesion_dom_sf"/>
</dbReference>
<dbReference type="InterPro" id="IPR050263">
    <property type="entry name" value="Bact_Fimbrial_Adh_Pro"/>
</dbReference>
<dbReference type="PANTHER" id="PTHR33420">
    <property type="entry name" value="FIMBRIAL SUBUNIT ELFA-RELATED"/>
    <property type="match status" value="1"/>
</dbReference>
<dbReference type="PANTHER" id="PTHR33420:SF34">
    <property type="entry name" value="MINOR FIMBRIAL SUBUNIT"/>
    <property type="match status" value="1"/>
</dbReference>
<dbReference type="Pfam" id="PF00419">
    <property type="entry name" value="Fimbrial"/>
    <property type="match status" value="1"/>
</dbReference>
<dbReference type="SUPFAM" id="SSF49401">
    <property type="entry name" value="Bacterial adhesins"/>
    <property type="match status" value="1"/>
</dbReference>
<reference key="1">
    <citation type="journal article" date="1997" name="Science">
        <title>The complete genome sequence of Escherichia coli K-12.</title>
        <authorList>
            <person name="Blattner F.R."/>
            <person name="Plunkett G. III"/>
            <person name="Bloch C.A."/>
            <person name="Perna N.T."/>
            <person name="Burland V."/>
            <person name="Riley M."/>
            <person name="Collado-Vides J."/>
            <person name="Glasner J.D."/>
            <person name="Rode C.K."/>
            <person name="Mayhew G.F."/>
            <person name="Gregor J."/>
            <person name="Davis N.W."/>
            <person name="Kirkpatrick H.A."/>
            <person name="Goeden M.A."/>
            <person name="Rose D.J."/>
            <person name="Mau B."/>
            <person name="Shao Y."/>
        </authorList>
    </citation>
    <scope>NUCLEOTIDE SEQUENCE [LARGE SCALE GENOMIC DNA]</scope>
    <source>
        <strain>K12 / MG1655 / ATCC 47076</strain>
    </source>
</reference>
<reference key="2">
    <citation type="journal article" date="2006" name="Mol. Syst. Biol.">
        <title>Highly accurate genome sequences of Escherichia coli K-12 strains MG1655 and W3110.</title>
        <authorList>
            <person name="Hayashi K."/>
            <person name="Morooka N."/>
            <person name="Yamamoto Y."/>
            <person name="Fujita K."/>
            <person name="Isono K."/>
            <person name="Choi S."/>
            <person name="Ohtsubo E."/>
            <person name="Baba T."/>
            <person name="Wanner B.L."/>
            <person name="Mori H."/>
            <person name="Horiuchi T."/>
        </authorList>
    </citation>
    <scope>NUCLEOTIDE SEQUENCE [LARGE SCALE GENOMIC DNA]</scope>
    <source>
        <strain>K12 / W3110 / ATCC 27325 / DSM 5911</strain>
    </source>
</reference>
<reference key="3">
    <citation type="journal article" date="2010" name="Environ. Microbiol.">
        <title>Escherichia coli K-12 possesses multiple cryptic but functional chaperone-usher fimbriae with distinct surface specificities.</title>
        <authorList>
            <person name="Korea C.G."/>
            <person name="Badouraly R."/>
            <person name="Prevost M.C."/>
            <person name="Ghigo J.M."/>
            <person name="Beloin C."/>
        </authorList>
    </citation>
    <scope>FUNCTION</scope>
    <scope>INDUCTION</scope>
    <scope>DISRUPTION PHENOTYPE</scope>
    <source>
        <strain>K12 / MG1655 / ATCC 47076</strain>
    </source>
</reference>
<name>YFCR_ECOLI</name>
<sequence>MTGGVMSQKFVVGAGLLVCSVCSLSAMAGSKPVDLILRVLVDAPPPCSIKGSQVEFGNMIADNVDGTNYRQDAKYTLNCTNSLANDLRMQLKGNTSTINGETVLSTNITGLGIRIENSADNSLFAVGENSWTPFNINNQPQLKAVPVKASGAQLAAGEFNASLTMVVDYQ</sequence>
<keyword id="KW-1185">Reference proteome</keyword>
<keyword id="KW-0732">Signal</keyword>
<organism>
    <name type="scientific">Escherichia coli (strain K12)</name>
    <dbReference type="NCBI Taxonomy" id="83333"/>
    <lineage>
        <taxon>Bacteria</taxon>
        <taxon>Pseudomonadati</taxon>
        <taxon>Pseudomonadota</taxon>
        <taxon>Gammaproteobacteria</taxon>
        <taxon>Enterobacterales</taxon>
        <taxon>Enterobacteriaceae</taxon>
        <taxon>Escherichia</taxon>
    </lineage>
</organism>